<feature type="chain" id="PRO_0000423323" description="DNA-directed RNA polymerases II and V subunit 6B">
    <location>
        <begin position="1"/>
        <end position="144"/>
    </location>
</feature>
<feature type="region of interest" description="Disordered" evidence="2">
    <location>
        <begin position="1"/>
        <end position="62"/>
    </location>
</feature>
<feature type="compositionally biased region" description="Acidic residues" evidence="2">
    <location>
        <begin position="1"/>
        <end position="32"/>
    </location>
</feature>
<feature type="compositionally biased region" description="Basic and acidic residues" evidence="2">
    <location>
        <begin position="46"/>
        <end position="56"/>
    </location>
</feature>
<organism>
    <name type="scientific">Arabidopsis thaliana</name>
    <name type="common">Mouse-ear cress</name>
    <dbReference type="NCBI Taxonomy" id="3702"/>
    <lineage>
        <taxon>Eukaryota</taxon>
        <taxon>Viridiplantae</taxon>
        <taxon>Streptophyta</taxon>
        <taxon>Embryophyta</taxon>
        <taxon>Tracheophyta</taxon>
        <taxon>Spermatophyta</taxon>
        <taxon>Magnoliopsida</taxon>
        <taxon>eudicotyledons</taxon>
        <taxon>Gunneridae</taxon>
        <taxon>Pentapetalae</taxon>
        <taxon>rosids</taxon>
        <taxon>malvids</taxon>
        <taxon>Brassicales</taxon>
        <taxon>Brassicaceae</taxon>
        <taxon>Camelineae</taxon>
        <taxon>Arabidopsis</taxon>
    </lineage>
</organism>
<dbReference type="EMBL" id="AC006955">
    <property type="protein sequence ID" value="AAD22343.1"/>
    <property type="molecule type" value="Genomic_DNA"/>
</dbReference>
<dbReference type="EMBL" id="CP002685">
    <property type="protein sequence ID" value="AEC05851.1"/>
    <property type="molecule type" value="Genomic_DNA"/>
</dbReference>
<dbReference type="EMBL" id="BT010184">
    <property type="protein sequence ID" value="AAQ22653.1"/>
    <property type="molecule type" value="mRNA"/>
</dbReference>
<dbReference type="EMBL" id="AK229481">
    <property type="protein sequence ID" value="BAF01339.1"/>
    <property type="molecule type" value="mRNA"/>
</dbReference>
<dbReference type="PIR" id="E84459">
    <property type="entry name" value="E84459"/>
</dbReference>
<dbReference type="RefSeq" id="NP_178540.1">
    <property type="nucleotide sequence ID" value="NM_126492.4"/>
</dbReference>
<dbReference type="SMR" id="Q9SJ96"/>
<dbReference type="BioGRID" id="407">
    <property type="interactions" value="16"/>
</dbReference>
<dbReference type="FunCoup" id="Q9SJ96">
    <property type="interactions" value="3734"/>
</dbReference>
<dbReference type="IntAct" id="Q9SJ96">
    <property type="interactions" value="10"/>
</dbReference>
<dbReference type="STRING" id="3702.Q9SJ96"/>
<dbReference type="PaxDb" id="3702-AT2G04630.1"/>
<dbReference type="ProteomicsDB" id="227975"/>
<dbReference type="EnsemblPlants" id="AT2G04630.1">
    <property type="protein sequence ID" value="AT2G04630.1"/>
    <property type="gene ID" value="AT2G04630"/>
</dbReference>
<dbReference type="GeneID" id="815006"/>
<dbReference type="Gramene" id="AT2G04630.1">
    <property type="protein sequence ID" value="AT2G04630.1"/>
    <property type="gene ID" value="AT2G04630"/>
</dbReference>
<dbReference type="KEGG" id="ath:AT2G04630"/>
<dbReference type="Araport" id="AT2G04630"/>
<dbReference type="TAIR" id="AT2G04630">
    <property type="gene designation" value="NRPB6B"/>
</dbReference>
<dbReference type="eggNOG" id="KOG3405">
    <property type="taxonomic scope" value="Eukaryota"/>
</dbReference>
<dbReference type="HOGENOM" id="CLU_112527_1_0_1"/>
<dbReference type="InParanoid" id="Q9SJ96"/>
<dbReference type="OMA" id="WRCRRDI"/>
<dbReference type="OrthoDB" id="259769at2759"/>
<dbReference type="PhylomeDB" id="Q9SJ96"/>
<dbReference type="PRO" id="PR:Q9SJ96"/>
<dbReference type="Proteomes" id="UP000006548">
    <property type="component" value="Chromosome 2"/>
</dbReference>
<dbReference type="ExpressionAtlas" id="Q9SJ96">
    <property type="expression patterns" value="baseline and differential"/>
</dbReference>
<dbReference type="GO" id="GO:0005665">
    <property type="term" value="C:RNA polymerase II, core complex"/>
    <property type="evidence" value="ECO:0000314"/>
    <property type="project" value="UniProtKB"/>
</dbReference>
<dbReference type="GO" id="GO:0000419">
    <property type="term" value="C:RNA polymerase V complex"/>
    <property type="evidence" value="ECO:0000314"/>
    <property type="project" value="UniProtKB"/>
</dbReference>
<dbReference type="GO" id="GO:0003677">
    <property type="term" value="F:DNA binding"/>
    <property type="evidence" value="ECO:0007669"/>
    <property type="project" value="InterPro"/>
</dbReference>
<dbReference type="GO" id="GO:0003899">
    <property type="term" value="F:DNA-directed RNA polymerase activity"/>
    <property type="evidence" value="ECO:0007669"/>
    <property type="project" value="InterPro"/>
</dbReference>
<dbReference type="GO" id="GO:0006351">
    <property type="term" value="P:DNA-templated transcription"/>
    <property type="evidence" value="ECO:0007669"/>
    <property type="project" value="InterPro"/>
</dbReference>
<dbReference type="FunFam" id="3.90.940.10:FF:000003">
    <property type="entry name" value="DNA-directed RNA polymerases I, II, and III subunit RPABC2"/>
    <property type="match status" value="1"/>
</dbReference>
<dbReference type="Gene3D" id="3.90.940.10">
    <property type="match status" value="1"/>
</dbReference>
<dbReference type="HAMAP" id="MF_00192">
    <property type="entry name" value="RNApol_arch_Rpo6"/>
    <property type="match status" value="1"/>
</dbReference>
<dbReference type="InterPro" id="IPR020708">
    <property type="entry name" value="DNA-dir_RNA_polK_14-18kDa_CS"/>
</dbReference>
<dbReference type="InterPro" id="IPR006110">
    <property type="entry name" value="Pol_omega/Rpo6/RPB6"/>
</dbReference>
<dbReference type="InterPro" id="IPR028363">
    <property type="entry name" value="RPB6"/>
</dbReference>
<dbReference type="InterPro" id="IPR036161">
    <property type="entry name" value="RPB6/omega-like_sf"/>
</dbReference>
<dbReference type="InterPro" id="IPR006111">
    <property type="entry name" value="Rpo6/Rpb6"/>
</dbReference>
<dbReference type="NCBIfam" id="NF002208">
    <property type="entry name" value="PRK01099.1-3"/>
    <property type="match status" value="1"/>
</dbReference>
<dbReference type="PANTHER" id="PTHR47227">
    <property type="entry name" value="DNA-DIRECTED RNA POLYMERASE SUBUNIT K"/>
    <property type="match status" value="1"/>
</dbReference>
<dbReference type="PANTHER" id="PTHR47227:SF4">
    <property type="entry name" value="DNA-DIRECTED RNA POLYMERASES II AND V SUBUNIT 6B"/>
    <property type="match status" value="1"/>
</dbReference>
<dbReference type="Pfam" id="PF01192">
    <property type="entry name" value="RNA_pol_Rpb6"/>
    <property type="match status" value="1"/>
</dbReference>
<dbReference type="PIRSF" id="PIRSF500154">
    <property type="entry name" value="RPB6"/>
    <property type="match status" value="1"/>
</dbReference>
<dbReference type="PIRSF" id="PIRSF000778">
    <property type="entry name" value="RpoK/RPB6"/>
    <property type="match status" value="1"/>
</dbReference>
<dbReference type="SMART" id="SM01409">
    <property type="entry name" value="RNA_pol_Rpb6"/>
    <property type="match status" value="1"/>
</dbReference>
<dbReference type="SUPFAM" id="SSF63562">
    <property type="entry name" value="RPB6/omega subunit-like"/>
    <property type="match status" value="1"/>
</dbReference>
<dbReference type="PROSITE" id="PS01111">
    <property type="entry name" value="RNA_POL_K_14KD"/>
    <property type="match status" value="1"/>
</dbReference>
<reference key="1">
    <citation type="journal article" date="1999" name="Nature">
        <title>Sequence and analysis of chromosome 2 of the plant Arabidopsis thaliana.</title>
        <authorList>
            <person name="Lin X."/>
            <person name="Kaul S."/>
            <person name="Rounsley S.D."/>
            <person name="Shea T.P."/>
            <person name="Benito M.-I."/>
            <person name="Town C.D."/>
            <person name="Fujii C.Y."/>
            <person name="Mason T.M."/>
            <person name="Bowman C.L."/>
            <person name="Barnstead M.E."/>
            <person name="Feldblyum T.V."/>
            <person name="Buell C.R."/>
            <person name="Ketchum K.A."/>
            <person name="Lee J.J."/>
            <person name="Ronning C.M."/>
            <person name="Koo H.L."/>
            <person name="Moffat K.S."/>
            <person name="Cronin L.A."/>
            <person name="Shen M."/>
            <person name="Pai G."/>
            <person name="Van Aken S."/>
            <person name="Umayam L."/>
            <person name="Tallon L.J."/>
            <person name="Gill J.E."/>
            <person name="Adams M.D."/>
            <person name="Carrera A.J."/>
            <person name="Creasy T.H."/>
            <person name="Goodman H.M."/>
            <person name="Somerville C.R."/>
            <person name="Copenhaver G.P."/>
            <person name="Preuss D."/>
            <person name="Nierman W.C."/>
            <person name="White O."/>
            <person name="Eisen J.A."/>
            <person name="Salzberg S.L."/>
            <person name="Fraser C.M."/>
            <person name="Venter J.C."/>
        </authorList>
    </citation>
    <scope>NUCLEOTIDE SEQUENCE [LARGE SCALE GENOMIC DNA]</scope>
    <source>
        <strain>cv. Columbia</strain>
    </source>
</reference>
<reference key="2">
    <citation type="journal article" date="2017" name="Plant J.">
        <title>Araport11: a complete reannotation of the Arabidopsis thaliana reference genome.</title>
        <authorList>
            <person name="Cheng C.Y."/>
            <person name="Krishnakumar V."/>
            <person name="Chan A.P."/>
            <person name="Thibaud-Nissen F."/>
            <person name="Schobel S."/>
            <person name="Town C.D."/>
        </authorList>
    </citation>
    <scope>GENOME REANNOTATION</scope>
    <source>
        <strain>cv. Columbia</strain>
    </source>
</reference>
<reference key="3">
    <citation type="journal article" date="2003" name="Science">
        <title>Empirical analysis of transcriptional activity in the Arabidopsis genome.</title>
        <authorList>
            <person name="Yamada K."/>
            <person name="Lim J."/>
            <person name="Dale J.M."/>
            <person name="Chen H."/>
            <person name="Shinn P."/>
            <person name="Palm C.J."/>
            <person name="Southwick A.M."/>
            <person name="Wu H.C."/>
            <person name="Kim C.J."/>
            <person name="Nguyen M."/>
            <person name="Pham P.K."/>
            <person name="Cheuk R.F."/>
            <person name="Karlin-Newmann G."/>
            <person name="Liu S.X."/>
            <person name="Lam B."/>
            <person name="Sakano H."/>
            <person name="Wu T."/>
            <person name="Yu G."/>
            <person name="Miranda M."/>
            <person name="Quach H.L."/>
            <person name="Tripp M."/>
            <person name="Chang C.H."/>
            <person name="Lee J.M."/>
            <person name="Toriumi M.J."/>
            <person name="Chan M.M."/>
            <person name="Tang C.C."/>
            <person name="Onodera C.S."/>
            <person name="Deng J.M."/>
            <person name="Akiyama K."/>
            <person name="Ansari Y."/>
            <person name="Arakawa T."/>
            <person name="Banh J."/>
            <person name="Banno F."/>
            <person name="Bowser L."/>
            <person name="Brooks S.Y."/>
            <person name="Carninci P."/>
            <person name="Chao Q."/>
            <person name="Choy N."/>
            <person name="Enju A."/>
            <person name="Goldsmith A.D."/>
            <person name="Gurjal M."/>
            <person name="Hansen N.F."/>
            <person name="Hayashizaki Y."/>
            <person name="Johnson-Hopson C."/>
            <person name="Hsuan V.W."/>
            <person name="Iida K."/>
            <person name="Karnes M."/>
            <person name="Khan S."/>
            <person name="Koesema E."/>
            <person name="Ishida J."/>
            <person name="Jiang P.X."/>
            <person name="Jones T."/>
            <person name="Kawai J."/>
            <person name="Kamiya A."/>
            <person name="Meyers C."/>
            <person name="Nakajima M."/>
            <person name="Narusaka M."/>
            <person name="Seki M."/>
            <person name="Sakurai T."/>
            <person name="Satou M."/>
            <person name="Tamse R."/>
            <person name="Vaysberg M."/>
            <person name="Wallender E.K."/>
            <person name="Wong C."/>
            <person name="Yamamura Y."/>
            <person name="Yuan S."/>
            <person name="Shinozaki K."/>
            <person name="Davis R.W."/>
            <person name="Theologis A."/>
            <person name="Ecker J.R."/>
        </authorList>
    </citation>
    <scope>NUCLEOTIDE SEQUENCE [LARGE SCALE MRNA]</scope>
    <source>
        <strain>cv. Columbia</strain>
    </source>
</reference>
<reference key="4">
    <citation type="submission" date="2006-07" db="EMBL/GenBank/DDBJ databases">
        <title>Large-scale analysis of RIKEN Arabidopsis full-length (RAFL) cDNAs.</title>
        <authorList>
            <person name="Totoki Y."/>
            <person name="Seki M."/>
            <person name="Ishida J."/>
            <person name="Nakajima M."/>
            <person name="Enju A."/>
            <person name="Kamiya A."/>
            <person name="Narusaka M."/>
            <person name="Shin-i T."/>
            <person name="Nakagawa M."/>
            <person name="Sakamoto N."/>
            <person name="Oishi K."/>
            <person name="Kohara Y."/>
            <person name="Kobayashi M."/>
            <person name="Toyoda A."/>
            <person name="Sakaki Y."/>
            <person name="Sakurai T."/>
            <person name="Iida K."/>
            <person name="Akiyama K."/>
            <person name="Satou M."/>
            <person name="Toyoda T."/>
            <person name="Konagaya A."/>
            <person name="Carninci P."/>
            <person name="Kawai J."/>
            <person name="Hayashizaki Y."/>
            <person name="Shinozaki K."/>
        </authorList>
    </citation>
    <scope>NUCLEOTIDE SEQUENCE [LARGE SCALE MRNA]</scope>
    <source>
        <strain>cv. Columbia</strain>
    </source>
</reference>
<reference key="5">
    <citation type="journal article" date="2009" name="Mol. Cell">
        <title>Subunit compositions of the RNA-silencing enzymes Pol IV and Pol V reveal their origins as specialized forms of RNA polymerase II.</title>
        <authorList>
            <person name="Ream T.S."/>
            <person name="Haag J.R."/>
            <person name="Wierzbicki A.T."/>
            <person name="Nicora C.D."/>
            <person name="Norbeck A.D."/>
            <person name="Zhu J.K."/>
            <person name="Hagen G."/>
            <person name="Guilfoyle T.J."/>
            <person name="Pasa-Tolic L."/>
            <person name="Pikaard C.S."/>
        </authorList>
    </citation>
    <scope>FUNCTION</scope>
    <scope>IDENTIFICATION BY MASS SPECTROMETRY</scope>
    <scope>SUBUNIT</scope>
    <scope>NOMENCLATURE</scope>
</reference>
<name>RPB6B_ARATH</name>
<proteinExistence type="evidence at protein level"/>
<gene>
    <name type="primary">NRPB6B</name>
    <name type="synonym">NRPE6B</name>
    <name type="ordered locus">At2g04630</name>
    <name type="ORF">F28I8.33</name>
</gene>
<comment type="function">
    <text evidence="3">DNA-dependent RNA polymerase catalyzes the transcription of DNA into RNA using the four ribonucleoside triphosphates as substrates. Component of RNA polymerase II which synthesizes mRNA precursors and many functional non-coding RNAs. Pol II is the central component of the basal RNA polymerase II transcription machinery. It is composed of mobile elements that move relative to each other. Component of RNA polymerase V which mediates RNA-directed DNA methylation-dependent (RdDM) transcriptional gene silencing (TGS) of endogenous repeated sequences, including transposable elements.</text>
</comment>
<comment type="subunit">
    <text evidence="3">Component of the RNA polymerase II and V complexes.</text>
</comment>
<comment type="interaction">
    <interactant intactId="EBI-4429205">
        <id>Q9SJ96</id>
    </interactant>
    <interactant intactId="EBI-25521688">
        <id>Q9LNC9</id>
        <label>MYB13</label>
    </interactant>
    <organismsDiffer>false</organismsDiffer>
    <experiments>3</experiments>
</comment>
<comment type="interaction">
    <interactant intactId="EBI-4429205">
        <id>Q9SJ96</id>
    </interactant>
    <interactant intactId="EBI-4426557">
        <id>Q84MB2</id>
        <label>TIFY8</label>
    </interactant>
    <organismsDiffer>false</organismsDiffer>
    <experiments>3</experiments>
</comment>
<comment type="subcellular location">
    <subcellularLocation>
        <location evidence="1">Nucleus</location>
    </subcellularLocation>
</comment>
<comment type="similarity">
    <text evidence="4">Belongs to the archaeal Rpo6/eukaryotic RPB6 RNA polymerase subunit family.</text>
</comment>
<keyword id="KW-0240">DNA-directed RNA polymerase</keyword>
<keyword id="KW-0539">Nucleus</keyword>
<keyword id="KW-1185">Reference proteome</keyword>
<keyword id="KW-0804">Transcription</keyword>
<evidence type="ECO:0000250" key="1"/>
<evidence type="ECO:0000256" key="2">
    <source>
        <dbReference type="SAM" id="MobiDB-lite"/>
    </source>
</evidence>
<evidence type="ECO:0000269" key="3">
    <source>
    </source>
</evidence>
<evidence type="ECO:0000305" key="4"/>
<protein>
    <recommendedName>
        <fullName>DNA-directed RNA polymerases II and V subunit 6B</fullName>
    </recommendedName>
</protein>
<accession>Q9SJ96</accession>
<sequence length="144" mass="16740">MADDDYNEVDDLGYEDEPAEPEIEEGVEEDADIKENDDVNVDPLETEDKVETEPVQRPRKTSKFMTKYERARILGTRALQISMNAPVMVELEGETDPLEIAMKELRQRKIPFTIRRYLPDMSYEEWGVDELIVEDSWKRQVGGD</sequence>